<reference key="1">
    <citation type="journal article" date="2002" name="Nucleic Acids Res.">
        <title>Genome sequence of Shigella flexneri 2a: insights into pathogenicity through comparison with genomes of Escherichia coli K12 and O157.</title>
        <authorList>
            <person name="Jin Q."/>
            <person name="Yuan Z."/>
            <person name="Xu J."/>
            <person name="Wang Y."/>
            <person name="Shen Y."/>
            <person name="Lu W."/>
            <person name="Wang J."/>
            <person name="Liu H."/>
            <person name="Yang J."/>
            <person name="Yang F."/>
            <person name="Zhang X."/>
            <person name="Zhang J."/>
            <person name="Yang G."/>
            <person name="Wu H."/>
            <person name="Qu D."/>
            <person name="Dong J."/>
            <person name="Sun L."/>
            <person name="Xue Y."/>
            <person name="Zhao A."/>
            <person name="Gao Y."/>
            <person name="Zhu J."/>
            <person name="Kan B."/>
            <person name="Ding K."/>
            <person name="Chen S."/>
            <person name="Cheng H."/>
            <person name="Yao Z."/>
            <person name="He B."/>
            <person name="Chen R."/>
            <person name="Ma D."/>
            <person name="Qiang B."/>
            <person name="Wen Y."/>
            <person name="Hou Y."/>
            <person name="Yu J."/>
        </authorList>
    </citation>
    <scope>NUCLEOTIDE SEQUENCE [LARGE SCALE GENOMIC DNA]</scope>
    <source>
        <strain>301 / Serotype 2a</strain>
    </source>
</reference>
<reference key="2">
    <citation type="journal article" date="2003" name="Infect. Immun.">
        <title>Complete genome sequence and comparative genomics of Shigella flexneri serotype 2a strain 2457T.</title>
        <authorList>
            <person name="Wei J."/>
            <person name="Goldberg M.B."/>
            <person name="Burland V."/>
            <person name="Venkatesan M.M."/>
            <person name="Deng W."/>
            <person name="Fournier G."/>
            <person name="Mayhew G.F."/>
            <person name="Plunkett G. III"/>
            <person name="Rose D.J."/>
            <person name="Darling A."/>
            <person name="Mau B."/>
            <person name="Perna N.T."/>
            <person name="Payne S.M."/>
            <person name="Runyen-Janecky L.J."/>
            <person name="Zhou S."/>
            <person name="Schwartz D.C."/>
            <person name="Blattner F.R."/>
        </authorList>
    </citation>
    <scope>NUCLEOTIDE SEQUENCE [LARGE SCALE GENOMIC DNA]</scope>
    <source>
        <strain>ATCC 700930 / 2457T / Serotype 2a</strain>
    </source>
</reference>
<sequence>MSTSDDIHNTTATGKCPFHQGGHDQSAGAGTTTRDWWPNQLRVDLLNQHSNRSNPLGEDFDYRKEFSKLDYYGLKKDLKALLTESQPWWPADWGSYAGLFIRMAWHGAGTYRSIDGRGGAGRGQQRFAPLNSWPDNVSLDKARRLLWPIKQKYGQKISWADLFILAGNVALENSGFRTFGFGAGREDVWEPDLDVNWGDEKAWLTHRHPEALAKAPLGATEMGLIYVNPEGPDHSGEPLSAAAAIRATFGNMGMNDEETVALIAGGHTLGKTHGAGPTSNVGPDPEAAPIEEQGLGWASTYGSGVGADAITSGLEVVWTQTPTQWSNYFFENLFKYEWVQTRSPAGAIQFEAVDAPEIIPDPFDPSKKRKPTMLVTDLTLRFDPEFEKISRRFLNDPQAFNEAFARAWFKLTHRDMGPKSRYIGPEVPKEDLIWQDPLPQPIYNPTEQDIIDLKFAIADSGLSVSELVSVAWASASTFRGGDKRGGANGARLALMPQRDWDVNAAAVRALPVLEKIQKESGKASLADIIVLAGVVGVEKAASAAGLSIHVPFAPGRVDARQDQTDIEMFELLEPIADGFRNYRARLDVSTTESLLIDKAQQLTLTAPEMTALVGGMRVLGAYFDGSKNGVFTDRVGVLSNDFFVNLLDMRYEWKATDESKELFEGRDRETGEVKYTASRADLVFGSNSVLRAVAEVYASSDAHEKFVKDFVAAWVKVMNLDRFDLL</sequence>
<proteinExistence type="inferred from homology"/>
<protein>
    <recommendedName>
        <fullName evidence="1">Catalase-peroxidase</fullName>
        <shortName evidence="1">CP</shortName>
        <ecNumber evidence="1">1.11.1.21</ecNumber>
    </recommendedName>
    <alternativeName>
        <fullName evidence="1">Peroxidase/catalase</fullName>
    </alternativeName>
</protein>
<feature type="chain" id="PRO_0000354930" description="Catalase-peroxidase">
    <location>
        <begin position="1"/>
        <end position="726"/>
    </location>
</feature>
<feature type="region of interest" description="Disordered" evidence="2">
    <location>
        <begin position="1"/>
        <end position="33"/>
    </location>
</feature>
<feature type="active site" description="Proton acceptor" evidence="1">
    <location>
        <position position="106"/>
    </location>
</feature>
<feature type="binding site" description="axial binding residue" evidence="1">
    <location>
        <position position="267"/>
    </location>
    <ligand>
        <name>heme b</name>
        <dbReference type="ChEBI" id="CHEBI:60344"/>
    </ligand>
    <ligandPart>
        <name>Fe</name>
        <dbReference type="ChEBI" id="CHEBI:18248"/>
    </ligandPart>
</feature>
<feature type="site" description="Transition state stabilizer" evidence="1">
    <location>
        <position position="102"/>
    </location>
</feature>
<feature type="cross-link" description="Tryptophyl-tyrosyl-methioninium (Trp-Tyr) (with M-252)" evidence="1">
    <location>
        <begin position="105"/>
        <end position="226"/>
    </location>
</feature>
<feature type="cross-link" description="Tryptophyl-tyrosyl-methioninium (Tyr-Met) (with W-105)" evidence="1">
    <location>
        <begin position="226"/>
        <end position="252"/>
    </location>
</feature>
<feature type="sequence conflict" description="In Ref. 2; AAP18747." evidence="3" ref="2">
    <original>Y</original>
    <variation>N</variation>
    <location>
        <position position="622"/>
    </location>
</feature>
<evidence type="ECO:0000255" key="1">
    <source>
        <dbReference type="HAMAP-Rule" id="MF_01961"/>
    </source>
</evidence>
<evidence type="ECO:0000256" key="2">
    <source>
        <dbReference type="SAM" id="MobiDB-lite"/>
    </source>
</evidence>
<evidence type="ECO:0000305" key="3"/>
<gene>
    <name evidence="1" type="primary">katG</name>
    <name type="ordered locus">SF4020</name>
    <name type="ordered locus">S3727</name>
</gene>
<accession>Q83IT3</accession>
<accession>Q7UB88</accession>
<keyword id="KW-0349">Heme</keyword>
<keyword id="KW-0376">Hydrogen peroxide</keyword>
<keyword id="KW-0408">Iron</keyword>
<keyword id="KW-0479">Metal-binding</keyword>
<keyword id="KW-0560">Oxidoreductase</keyword>
<keyword id="KW-0575">Peroxidase</keyword>
<keyword id="KW-1185">Reference proteome</keyword>
<name>KATG_SHIFL</name>
<organism>
    <name type="scientific">Shigella flexneri</name>
    <dbReference type="NCBI Taxonomy" id="623"/>
    <lineage>
        <taxon>Bacteria</taxon>
        <taxon>Pseudomonadati</taxon>
        <taxon>Pseudomonadota</taxon>
        <taxon>Gammaproteobacteria</taxon>
        <taxon>Enterobacterales</taxon>
        <taxon>Enterobacteriaceae</taxon>
        <taxon>Shigella</taxon>
    </lineage>
</organism>
<comment type="function">
    <text evidence="1">Bifunctional enzyme with both catalase and broad-spectrum peroxidase activity.</text>
</comment>
<comment type="catalytic activity">
    <reaction evidence="1">
        <text>H2O2 + AH2 = A + 2 H2O</text>
        <dbReference type="Rhea" id="RHEA:30275"/>
        <dbReference type="ChEBI" id="CHEBI:13193"/>
        <dbReference type="ChEBI" id="CHEBI:15377"/>
        <dbReference type="ChEBI" id="CHEBI:16240"/>
        <dbReference type="ChEBI" id="CHEBI:17499"/>
        <dbReference type="EC" id="1.11.1.21"/>
    </reaction>
</comment>
<comment type="catalytic activity">
    <reaction evidence="1">
        <text>2 H2O2 = O2 + 2 H2O</text>
        <dbReference type="Rhea" id="RHEA:20309"/>
        <dbReference type="ChEBI" id="CHEBI:15377"/>
        <dbReference type="ChEBI" id="CHEBI:15379"/>
        <dbReference type="ChEBI" id="CHEBI:16240"/>
        <dbReference type="EC" id="1.11.1.21"/>
    </reaction>
</comment>
<comment type="cofactor">
    <cofactor evidence="1">
        <name>heme b</name>
        <dbReference type="ChEBI" id="CHEBI:60344"/>
    </cofactor>
    <text evidence="1">Binds 1 heme b (iron(II)-protoporphyrin IX) group per dimer.</text>
</comment>
<comment type="subunit">
    <text evidence="1">Homodimer or homotetramer.</text>
</comment>
<comment type="PTM">
    <text evidence="1">Formation of the three residue Trp-Tyr-Met cross-link is important for the catalase, but not the peroxidase activity of the enzyme.</text>
</comment>
<comment type="similarity">
    <text evidence="1">Belongs to the peroxidase family. Peroxidase/catalase subfamily.</text>
</comment>
<dbReference type="EC" id="1.11.1.21" evidence="1"/>
<dbReference type="EMBL" id="AE005674">
    <property type="protein sequence ID" value="AAN45453.2"/>
    <property type="molecule type" value="Genomic_DNA"/>
</dbReference>
<dbReference type="EMBL" id="AE014073">
    <property type="protein sequence ID" value="AAP18747.1"/>
    <property type="molecule type" value="Genomic_DNA"/>
</dbReference>
<dbReference type="RefSeq" id="NP_709746.2">
    <property type="nucleotide sequence ID" value="NC_004337.2"/>
</dbReference>
<dbReference type="RefSeq" id="WP_011069586.1">
    <property type="nucleotide sequence ID" value="NZ_CP123365.1"/>
</dbReference>
<dbReference type="SMR" id="Q83IT3"/>
<dbReference type="STRING" id="198214.SF4020"/>
<dbReference type="PeroxiBase" id="2576">
    <property type="entry name" value="SflCP01_2457T"/>
</dbReference>
<dbReference type="PeroxiBase" id="3662">
    <property type="entry name" value="SflCP01_301"/>
</dbReference>
<dbReference type="PaxDb" id="198214-SF4020"/>
<dbReference type="GeneID" id="1026927"/>
<dbReference type="KEGG" id="sfl:SF4020"/>
<dbReference type="KEGG" id="sfx:S3727"/>
<dbReference type="PATRIC" id="fig|198214.7.peg.4737"/>
<dbReference type="HOGENOM" id="CLU_025424_2_0_6"/>
<dbReference type="Proteomes" id="UP000001006">
    <property type="component" value="Chromosome"/>
</dbReference>
<dbReference type="Proteomes" id="UP000002673">
    <property type="component" value="Chromosome"/>
</dbReference>
<dbReference type="GO" id="GO:0005829">
    <property type="term" value="C:cytosol"/>
    <property type="evidence" value="ECO:0007669"/>
    <property type="project" value="TreeGrafter"/>
</dbReference>
<dbReference type="GO" id="GO:0004096">
    <property type="term" value="F:catalase activity"/>
    <property type="evidence" value="ECO:0007669"/>
    <property type="project" value="UniProtKB-UniRule"/>
</dbReference>
<dbReference type="GO" id="GO:0020037">
    <property type="term" value="F:heme binding"/>
    <property type="evidence" value="ECO:0007669"/>
    <property type="project" value="InterPro"/>
</dbReference>
<dbReference type="GO" id="GO:0046872">
    <property type="term" value="F:metal ion binding"/>
    <property type="evidence" value="ECO:0007669"/>
    <property type="project" value="UniProtKB-KW"/>
</dbReference>
<dbReference type="GO" id="GO:0070301">
    <property type="term" value="P:cellular response to hydrogen peroxide"/>
    <property type="evidence" value="ECO:0007669"/>
    <property type="project" value="TreeGrafter"/>
</dbReference>
<dbReference type="GO" id="GO:0042744">
    <property type="term" value="P:hydrogen peroxide catabolic process"/>
    <property type="evidence" value="ECO:0007669"/>
    <property type="project" value="UniProtKB-KW"/>
</dbReference>
<dbReference type="CDD" id="cd08200">
    <property type="entry name" value="catalase_peroxidase_2"/>
    <property type="match status" value="1"/>
</dbReference>
<dbReference type="FunFam" id="1.10.420.10:FF:000002">
    <property type="entry name" value="Catalase-peroxidase"/>
    <property type="match status" value="1"/>
</dbReference>
<dbReference type="FunFam" id="1.10.420.10:FF:000004">
    <property type="entry name" value="Catalase-peroxidase"/>
    <property type="match status" value="1"/>
</dbReference>
<dbReference type="FunFam" id="1.10.520.10:FF:000002">
    <property type="entry name" value="Catalase-peroxidase"/>
    <property type="match status" value="1"/>
</dbReference>
<dbReference type="Gene3D" id="1.10.520.10">
    <property type="match status" value="2"/>
</dbReference>
<dbReference type="Gene3D" id="1.10.420.10">
    <property type="entry name" value="Peroxidase, domain 2"/>
    <property type="match status" value="2"/>
</dbReference>
<dbReference type="HAMAP" id="MF_01961">
    <property type="entry name" value="Catal_peroxid"/>
    <property type="match status" value="1"/>
</dbReference>
<dbReference type="InterPro" id="IPR000763">
    <property type="entry name" value="Catalase_peroxidase"/>
</dbReference>
<dbReference type="InterPro" id="IPR002016">
    <property type="entry name" value="Haem_peroxidase"/>
</dbReference>
<dbReference type="InterPro" id="IPR010255">
    <property type="entry name" value="Haem_peroxidase_sf"/>
</dbReference>
<dbReference type="InterPro" id="IPR019794">
    <property type="entry name" value="Peroxidases_AS"/>
</dbReference>
<dbReference type="InterPro" id="IPR019793">
    <property type="entry name" value="Peroxidases_heam-ligand_BS"/>
</dbReference>
<dbReference type="NCBIfam" id="TIGR00198">
    <property type="entry name" value="cat_per_HPI"/>
    <property type="match status" value="1"/>
</dbReference>
<dbReference type="NCBIfam" id="NF011635">
    <property type="entry name" value="PRK15061.1"/>
    <property type="match status" value="1"/>
</dbReference>
<dbReference type="PANTHER" id="PTHR30555:SF0">
    <property type="entry name" value="CATALASE-PEROXIDASE"/>
    <property type="match status" value="1"/>
</dbReference>
<dbReference type="PANTHER" id="PTHR30555">
    <property type="entry name" value="HYDROPEROXIDASE I, BIFUNCTIONAL CATALASE-PEROXIDASE"/>
    <property type="match status" value="1"/>
</dbReference>
<dbReference type="Pfam" id="PF00141">
    <property type="entry name" value="peroxidase"/>
    <property type="match status" value="2"/>
</dbReference>
<dbReference type="PRINTS" id="PR00460">
    <property type="entry name" value="BPEROXIDASE"/>
</dbReference>
<dbReference type="PRINTS" id="PR00458">
    <property type="entry name" value="PEROXIDASE"/>
</dbReference>
<dbReference type="SUPFAM" id="SSF48113">
    <property type="entry name" value="Heme-dependent peroxidases"/>
    <property type="match status" value="2"/>
</dbReference>
<dbReference type="PROSITE" id="PS00435">
    <property type="entry name" value="PEROXIDASE_1"/>
    <property type="match status" value="1"/>
</dbReference>
<dbReference type="PROSITE" id="PS00436">
    <property type="entry name" value="PEROXIDASE_2"/>
    <property type="match status" value="1"/>
</dbReference>
<dbReference type="PROSITE" id="PS50873">
    <property type="entry name" value="PEROXIDASE_4"/>
    <property type="match status" value="1"/>
</dbReference>